<accession>Q0SP65</accession>
<accession>G0IQU4</accession>
<reference key="1">
    <citation type="journal article" date="2006" name="BMC Genomics">
        <title>Comparative genome analysis: selection pressure on the Borrelia vls cassettes is essential for infectivity.</title>
        <authorList>
            <person name="Gloeckner G."/>
            <person name="Schulte-Spechtel U."/>
            <person name="Schilhabel M."/>
            <person name="Felder M."/>
            <person name="Suehnel J."/>
            <person name="Wilske B."/>
            <person name="Platzer M."/>
        </authorList>
    </citation>
    <scope>NUCLEOTIDE SEQUENCE [LARGE SCALE GENOMIC DNA]</scope>
    <source>
        <strain>PKo</strain>
    </source>
</reference>
<reference key="2">
    <citation type="journal article" date="2011" name="J. Bacteriol.">
        <title>Whole-genome sequences of two Borrelia afzelii and two Borrelia garinii Lyme disease agent isolates.</title>
        <authorList>
            <person name="Casjens S.R."/>
            <person name="Mongodin E.F."/>
            <person name="Qiu W.G."/>
            <person name="Dunn J.J."/>
            <person name="Luft B.J."/>
            <person name="Fraser-Liggett C.M."/>
            <person name="Schutzer S.E."/>
        </authorList>
    </citation>
    <scope>NUCLEOTIDE SEQUENCE [LARGE SCALE GENOMIC DNA]</scope>
    <source>
        <strain>PKo</strain>
    </source>
</reference>
<name>RSGA_BORAP</name>
<organism>
    <name type="scientific">Borreliella afzelii (strain PKo)</name>
    <name type="common">Borrelia afzelii</name>
    <dbReference type="NCBI Taxonomy" id="390236"/>
    <lineage>
        <taxon>Bacteria</taxon>
        <taxon>Pseudomonadati</taxon>
        <taxon>Spirochaetota</taxon>
        <taxon>Spirochaetia</taxon>
        <taxon>Spirochaetales</taxon>
        <taxon>Borreliaceae</taxon>
        <taxon>Borreliella</taxon>
    </lineage>
</organism>
<proteinExistence type="inferred from homology"/>
<dbReference type="EC" id="3.6.1.-" evidence="1"/>
<dbReference type="EMBL" id="CP000395">
    <property type="protein sequence ID" value="ABH01363.1"/>
    <property type="molecule type" value="Genomic_DNA"/>
</dbReference>
<dbReference type="EMBL" id="CP002933">
    <property type="protein sequence ID" value="AEL69330.1"/>
    <property type="molecule type" value="Genomic_DNA"/>
</dbReference>
<dbReference type="RefSeq" id="WP_011600833.1">
    <property type="nucleotide sequence ID" value="NC_008277.1"/>
</dbReference>
<dbReference type="SMR" id="Q0SP65"/>
<dbReference type="STRING" id="29518.BLA32_03795"/>
<dbReference type="KEGG" id="baf:BAPKO_0100"/>
<dbReference type="KEGG" id="bafz:BafPKo_0097"/>
<dbReference type="PATRIC" id="fig|390236.22.peg.96"/>
<dbReference type="eggNOG" id="COG1162">
    <property type="taxonomic scope" value="Bacteria"/>
</dbReference>
<dbReference type="HOGENOM" id="CLU_033617_2_1_12"/>
<dbReference type="OrthoDB" id="9809485at2"/>
<dbReference type="Proteomes" id="UP000005216">
    <property type="component" value="Chromosome"/>
</dbReference>
<dbReference type="GO" id="GO:0005737">
    <property type="term" value="C:cytoplasm"/>
    <property type="evidence" value="ECO:0007669"/>
    <property type="project" value="UniProtKB-SubCell"/>
</dbReference>
<dbReference type="GO" id="GO:0005525">
    <property type="term" value="F:GTP binding"/>
    <property type="evidence" value="ECO:0007669"/>
    <property type="project" value="UniProtKB-UniRule"/>
</dbReference>
<dbReference type="GO" id="GO:0003924">
    <property type="term" value="F:GTPase activity"/>
    <property type="evidence" value="ECO:0007669"/>
    <property type="project" value="UniProtKB-UniRule"/>
</dbReference>
<dbReference type="GO" id="GO:0046872">
    <property type="term" value="F:metal ion binding"/>
    <property type="evidence" value="ECO:0007669"/>
    <property type="project" value="UniProtKB-KW"/>
</dbReference>
<dbReference type="GO" id="GO:0019843">
    <property type="term" value="F:rRNA binding"/>
    <property type="evidence" value="ECO:0007669"/>
    <property type="project" value="UniProtKB-KW"/>
</dbReference>
<dbReference type="GO" id="GO:0042274">
    <property type="term" value="P:ribosomal small subunit biogenesis"/>
    <property type="evidence" value="ECO:0007669"/>
    <property type="project" value="UniProtKB-UniRule"/>
</dbReference>
<dbReference type="CDD" id="cd01854">
    <property type="entry name" value="YjeQ_EngC"/>
    <property type="match status" value="1"/>
</dbReference>
<dbReference type="Gene3D" id="3.40.50.300">
    <property type="entry name" value="P-loop containing nucleotide triphosphate hydrolases"/>
    <property type="match status" value="1"/>
</dbReference>
<dbReference type="Gene3D" id="1.10.40.50">
    <property type="entry name" value="Probable gtpase engc, domain 3"/>
    <property type="match status" value="1"/>
</dbReference>
<dbReference type="HAMAP" id="MF_01820">
    <property type="entry name" value="GTPase_RsgA"/>
    <property type="match status" value="1"/>
</dbReference>
<dbReference type="InterPro" id="IPR030378">
    <property type="entry name" value="G_CP_dom"/>
</dbReference>
<dbReference type="InterPro" id="IPR027417">
    <property type="entry name" value="P-loop_NTPase"/>
</dbReference>
<dbReference type="InterPro" id="IPR004881">
    <property type="entry name" value="Ribosome_biogen_GTPase_RsgA"/>
</dbReference>
<dbReference type="InterPro" id="IPR010914">
    <property type="entry name" value="RsgA_GTPase_dom"/>
</dbReference>
<dbReference type="NCBIfam" id="TIGR00157">
    <property type="entry name" value="ribosome small subunit-dependent GTPase A"/>
    <property type="match status" value="1"/>
</dbReference>
<dbReference type="PANTHER" id="PTHR32120">
    <property type="entry name" value="SMALL RIBOSOMAL SUBUNIT BIOGENESIS GTPASE RSGA"/>
    <property type="match status" value="1"/>
</dbReference>
<dbReference type="PANTHER" id="PTHR32120:SF11">
    <property type="entry name" value="SMALL RIBOSOMAL SUBUNIT BIOGENESIS GTPASE RSGA 1, MITOCHONDRIAL-RELATED"/>
    <property type="match status" value="1"/>
</dbReference>
<dbReference type="Pfam" id="PF03193">
    <property type="entry name" value="RsgA_GTPase"/>
    <property type="match status" value="1"/>
</dbReference>
<dbReference type="SUPFAM" id="SSF52540">
    <property type="entry name" value="P-loop containing nucleoside triphosphate hydrolases"/>
    <property type="match status" value="1"/>
</dbReference>
<dbReference type="PROSITE" id="PS50936">
    <property type="entry name" value="ENGC_GTPASE"/>
    <property type="match status" value="1"/>
</dbReference>
<dbReference type="PROSITE" id="PS51721">
    <property type="entry name" value="G_CP"/>
    <property type="match status" value="1"/>
</dbReference>
<gene>
    <name evidence="1" type="primary">rsgA</name>
    <name type="ordered locus">BAPKO_0100</name>
    <name type="ordered locus">BafPKo_0097</name>
</gene>
<evidence type="ECO:0000255" key="1">
    <source>
        <dbReference type="HAMAP-Rule" id="MF_01820"/>
    </source>
</evidence>
<evidence type="ECO:0000255" key="2">
    <source>
        <dbReference type="PROSITE-ProRule" id="PRU01058"/>
    </source>
</evidence>
<comment type="function">
    <text evidence="1">One of several proteins that assist in the late maturation steps of the functional core of the 30S ribosomal subunit. Helps release RbfA from mature subunits. May play a role in the assembly of ribosomal proteins into the subunit. Circularly permuted GTPase that catalyzes slow GTP hydrolysis, GTPase activity is stimulated by the 30S ribosomal subunit.</text>
</comment>
<comment type="cofactor">
    <cofactor evidence="1">
        <name>Zn(2+)</name>
        <dbReference type="ChEBI" id="CHEBI:29105"/>
    </cofactor>
    <text evidence="1">Binds 1 zinc ion per subunit.</text>
</comment>
<comment type="subunit">
    <text evidence="1">Monomer. Associates with 30S ribosomal subunit, binds 16S rRNA.</text>
</comment>
<comment type="subcellular location">
    <subcellularLocation>
        <location evidence="1">Cytoplasm</location>
    </subcellularLocation>
</comment>
<comment type="similarity">
    <text evidence="1">Belongs to the TRAFAC class YlqF/YawG GTPase family. RsgA subfamily.</text>
</comment>
<sequence>MNYLEFEVIWGVNNIYSILELKSKLIYEGIFKGKVLETGCKEYSPLVPGDIVLGYIYGSRKVYIDKRASRKNILWRYNRKADLRQTIVSNIDNILIVNSANFPEMKNFFIDRVLVVAEEQNIVPIIVINKIDKGISQRVEEFSEIYKNLGYKVLKTSVKTFEGIKEIKEVLRNSRTSFIGQSGVGKSSLINLIDSKASQSVNEISHKYSRGKHTTVYAISFYSESGIIVDTPGIKEFGIETLPFENLRYYFKEFENFASLCKYKSCLHVSEPCCSVISSLGNGISKLRYESYLKILSELKNYKNYAR</sequence>
<protein>
    <recommendedName>
        <fullName evidence="1">Small ribosomal subunit biogenesis GTPase RsgA</fullName>
        <ecNumber evidence="1">3.6.1.-</ecNumber>
    </recommendedName>
</protein>
<keyword id="KW-0963">Cytoplasm</keyword>
<keyword id="KW-0342">GTP-binding</keyword>
<keyword id="KW-0378">Hydrolase</keyword>
<keyword id="KW-0479">Metal-binding</keyword>
<keyword id="KW-0547">Nucleotide-binding</keyword>
<keyword id="KW-0690">Ribosome biogenesis</keyword>
<keyword id="KW-0694">RNA-binding</keyword>
<keyword id="KW-0699">rRNA-binding</keyword>
<keyword id="KW-0862">Zinc</keyword>
<feature type="chain" id="PRO_1000188036" description="Small ribosomal subunit biogenesis GTPase RsgA">
    <location>
        <begin position="1"/>
        <end position="307"/>
    </location>
</feature>
<feature type="domain" description="CP-type G" evidence="2">
    <location>
        <begin position="80"/>
        <end position="237"/>
    </location>
</feature>
<feature type="binding site" evidence="1">
    <location>
        <begin position="129"/>
        <end position="132"/>
    </location>
    <ligand>
        <name>GTP</name>
        <dbReference type="ChEBI" id="CHEBI:37565"/>
    </ligand>
</feature>
<feature type="binding site" evidence="1">
    <location>
        <begin position="180"/>
        <end position="188"/>
    </location>
    <ligand>
        <name>GTP</name>
        <dbReference type="ChEBI" id="CHEBI:37565"/>
    </ligand>
</feature>
<feature type="binding site" evidence="1">
    <location>
        <position position="261"/>
    </location>
    <ligand>
        <name>Zn(2+)</name>
        <dbReference type="ChEBI" id="CHEBI:29105"/>
    </ligand>
</feature>
<feature type="binding site" evidence="1">
    <location>
        <position position="266"/>
    </location>
    <ligand>
        <name>Zn(2+)</name>
        <dbReference type="ChEBI" id="CHEBI:29105"/>
    </ligand>
</feature>
<feature type="binding site" evidence="1">
    <location>
        <position position="268"/>
    </location>
    <ligand>
        <name>Zn(2+)</name>
        <dbReference type="ChEBI" id="CHEBI:29105"/>
    </ligand>
</feature>
<feature type="binding site" evidence="1">
    <location>
        <position position="274"/>
    </location>
    <ligand>
        <name>Zn(2+)</name>
        <dbReference type="ChEBI" id="CHEBI:29105"/>
    </ligand>
</feature>